<accession>P44044</accession>
<protein>
    <recommendedName>
        <fullName>Uncharacterized protein HI_0731</fullName>
    </recommendedName>
</protein>
<keyword id="KW-1185">Reference proteome</keyword>
<reference key="1">
    <citation type="journal article" date="1995" name="Science">
        <title>Whole-genome random sequencing and assembly of Haemophilus influenzae Rd.</title>
        <authorList>
            <person name="Fleischmann R.D."/>
            <person name="Adams M.D."/>
            <person name="White O."/>
            <person name="Clayton R.A."/>
            <person name="Kirkness E.F."/>
            <person name="Kerlavage A.R."/>
            <person name="Bult C.J."/>
            <person name="Tomb J.-F."/>
            <person name="Dougherty B.A."/>
            <person name="Merrick J.M."/>
            <person name="McKenney K."/>
            <person name="Sutton G.G."/>
            <person name="FitzHugh W."/>
            <person name="Fields C.A."/>
            <person name="Gocayne J.D."/>
            <person name="Scott J.D."/>
            <person name="Shirley R."/>
            <person name="Liu L.-I."/>
            <person name="Glodek A."/>
            <person name="Kelley J.M."/>
            <person name="Weidman J.F."/>
            <person name="Phillips C.A."/>
            <person name="Spriggs T."/>
            <person name="Hedblom E."/>
            <person name="Cotton M.D."/>
            <person name="Utterback T.R."/>
            <person name="Hanna M.C."/>
            <person name="Nguyen D.T."/>
            <person name="Saudek D.M."/>
            <person name="Brandon R.C."/>
            <person name="Fine L.D."/>
            <person name="Fritchman J.L."/>
            <person name="Fuhrmann J.L."/>
            <person name="Geoghagen N.S.M."/>
            <person name="Gnehm C.L."/>
            <person name="McDonald L.A."/>
            <person name="Small K.V."/>
            <person name="Fraser C.M."/>
            <person name="Smith H.O."/>
            <person name="Venter J.C."/>
        </authorList>
    </citation>
    <scope>NUCLEOTIDE SEQUENCE [LARGE SCALE GENOMIC DNA]</scope>
    <source>
        <strain>ATCC 51907 / DSM 11121 / KW20 / Rd</strain>
    </source>
</reference>
<name>Y731_HAEIN</name>
<sequence>MHQQYYNKPLHKLENNIDVTNGLINQRRFDPRKVDVMARKGTIERWILNASLPVGFTIQGAKFVVESQGEHQLQAEELAWKDTVWVKNKTQILVKFDQASSGNYPFLFGVSNLMLEDMGCLGVLMVQ</sequence>
<gene>
    <name type="ordered locus">HI_0731</name>
</gene>
<organism>
    <name type="scientific">Haemophilus influenzae (strain ATCC 51907 / DSM 11121 / KW20 / Rd)</name>
    <dbReference type="NCBI Taxonomy" id="71421"/>
    <lineage>
        <taxon>Bacteria</taxon>
        <taxon>Pseudomonadati</taxon>
        <taxon>Pseudomonadota</taxon>
        <taxon>Gammaproteobacteria</taxon>
        <taxon>Pasteurellales</taxon>
        <taxon>Pasteurellaceae</taxon>
        <taxon>Haemophilus</taxon>
    </lineage>
</organism>
<dbReference type="EMBL" id="L42023">
    <property type="protein sequence ID" value="AAC22392.1"/>
    <property type="molecule type" value="Genomic_DNA"/>
</dbReference>
<dbReference type="PIR" id="H64012">
    <property type="entry name" value="H64012"/>
</dbReference>
<dbReference type="SMR" id="P44044"/>
<dbReference type="STRING" id="71421.HI_0731"/>
<dbReference type="EnsemblBacteria" id="AAC22392">
    <property type="protein sequence ID" value="AAC22392"/>
    <property type="gene ID" value="HI_0731"/>
</dbReference>
<dbReference type="KEGG" id="hin:HI_0731"/>
<dbReference type="eggNOG" id="COG2132">
    <property type="taxonomic scope" value="Bacteria"/>
</dbReference>
<dbReference type="HOGENOM" id="CLU_137877_0_0_6"/>
<dbReference type="Proteomes" id="UP000000579">
    <property type="component" value="Chromosome"/>
</dbReference>
<dbReference type="GO" id="GO:0005507">
    <property type="term" value="F:copper ion binding"/>
    <property type="evidence" value="ECO:0007669"/>
    <property type="project" value="InterPro"/>
</dbReference>
<dbReference type="GO" id="GO:0016491">
    <property type="term" value="F:oxidoreductase activity"/>
    <property type="evidence" value="ECO:0007669"/>
    <property type="project" value="InterPro"/>
</dbReference>
<dbReference type="Gene3D" id="2.60.40.420">
    <property type="entry name" value="Cupredoxins - blue copper proteins"/>
    <property type="match status" value="1"/>
</dbReference>
<dbReference type="InterPro" id="IPR011706">
    <property type="entry name" value="Cu-oxidase_C"/>
</dbReference>
<dbReference type="InterPro" id="IPR008972">
    <property type="entry name" value="Cupredoxin"/>
</dbReference>
<dbReference type="Pfam" id="PF07731">
    <property type="entry name" value="Cu-oxidase_2"/>
    <property type="match status" value="1"/>
</dbReference>
<dbReference type="SUPFAM" id="SSF49503">
    <property type="entry name" value="Cupredoxins"/>
    <property type="match status" value="1"/>
</dbReference>
<feature type="chain" id="PRO_0000077951" description="Uncharacterized protein HI_0731">
    <location>
        <begin position="1"/>
        <end position="127"/>
    </location>
</feature>
<proteinExistence type="predicted"/>